<evidence type="ECO:0000269" key="1">
    <source>
    </source>
</evidence>
<evidence type="ECO:0000305" key="2"/>
<evidence type="ECO:0000305" key="3">
    <source>
    </source>
</evidence>
<name>STX8A_SCOAN</name>
<reference key="1">
    <citation type="journal article" date="2007" name="Toxicon">
        <title>Venomic analyses of Scolopendra viridicornis nigra and Scolopendra angulata (Centipede, Scolopendromorpha): shedding light on venoms from a neglected group.</title>
        <authorList>
            <person name="Rates B."/>
            <person name="Bemquerer M.P."/>
            <person name="Richardson M."/>
            <person name="Borges M.H."/>
            <person name="Morales R.A.V."/>
            <person name="De Lima M.E."/>
            <person name="Pimenta A.M.C."/>
        </authorList>
    </citation>
    <scope>PROTEIN SEQUENCE</scope>
    <scope>MASS SPECTROMETRY</scope>
    <scope>SUBCELLULAR LOCATION</scope>
    <source>
        <tissue>Venom</tissue>
    </source>
</reference>
<proteinExistence type="evidence at protein level"/>
<accession>P0C8C9</accession>
<feature type="chain" id="PRO_0000352865" description="Scolopendra 7913.19 Da toxin">
    <location>
        <begin position="1"/>
        <end position="17" status="greater than"/>
    </location>
</feature>
<feature type="non-terminal residue">
    <location>
        <position position="17"/>
    </location>
</feature>
<sequence>LKVPDLPLPEXYXXALN</sequence>
<organism>
    <name type="scientific">Scolopendra angulata</name>
    <name type="common">Barbados giant red centipede</name>
    <dbReference type="NCBI Taxonomy" id="486498"/>
    <lineage>
        <taxon>Eukaryota</taxon>
        <taxon>Metazoa</taxon>
        <taxon>Ecdysozoa</taxon>
        <taxon>Arthropoda</taxon>
        <taxon>Myriapoda</taxon>
        <taxon>Chilopoda</taxon>
        <taxon>Pleurostigmophora</taxon>
        <taxon>Scolopendromorpha</taxon>
        <taxon>Scolopendridae</taxon>
        <taxon>Scolopendra</taxon>
    </lineage>
</organism>
<keyword id="KW-0903">Direct protein sequencing</keyword>
<keyword id="KW-0528">Neurotoxin</keyword>
<keyword id="KW-0964">Secreted</keyword>
<keyword id="KW-0800">Toxin</keyword>
<protein>
    <recommendedName>
        <fullName>Scolopendra 7913.19 Da toxin</fullName>
    </recommendedName>
</protein>
<dbReference type="GO" id="GO:0005576">
    <property type="term" value="C:extracellular region"/>
    <property type="evidence" value="ECO:0007669"/>
    <property type="project" value="UniProtKB-SubCell"/>
</dbReference>
<dbReference type="GO" id="GO:0090729">
    <property type="term" value="F:toxin activity"/>
    <property type="evidence" value="ECO:0007669"/>
    <property type="project" value="UniProtKB-KW"/>
</dbReference>
<comment type="subcellular location">
    <subcellularLocation>
        <location evidence="1">Secreted</location>
    </subcellularLocation>
</comment>
<comment type="tissue specificity">
    <text evidence="3">Expressed by the venom gland.</text>
</comment>
<comment type="mass spectrometry"/>
<comment type="similarity">
    <text evidence="2">Belongs to the scolopendra toxin 8 family.</text>
</comment>